<name>ENGB_ANAD2</name>
<proteinExistence type="inferred from homology"/>
<gene>
    <name evidence="1" type="primary">engB</name>
    <name type="ordered locus">A2cp1_2867</name>
</gene>
<evidence type="ECO:0000255" key="1">
    <source>
        <dbReference type="HAMAP-Rule" id="MF_00321"/>
    </source>
</evidence>
<dbReference type="EMBL" id="CP001359">
    <property type="protein sequence ID" value="ACL66204.1"/>
    <property type="molecule type" value="Genomic_DNA"/>
</dbReference>
<dbReference type="SMR" id="B8JEQ8"/>
<dbReference type="KEGG" id="acp:A2cp1_2867"/>
<dbReference type="HOGENOM" id="CLU_033732_3_0_7"/>
<dbReference type="Proteomes" id="UP000007089">
    <property type="component" value="Chromosome"/>
</dbReference>
<dbReference type="GO" id="GO:0005829">
    <property type="term" value="C:cytosol"/>
    <property type="evidence" value="ECO:0007669"/>
    <property type="project" value="TreeGrafter"/>
</dbReference>
<dbReference type="GO" id="GO:0005525">
    <property type="term" value="F:GTP binding"/>
    <property type="evidence" value="ECO:0007669"/>
    <property type="project" value="UniProtKB-UniRule"/>
</dbReference>
<dbReference type="GO" id="GO:0046872">
    <property type="term" value="F:metal ion binding"/>
    <property type="evidence" value="ECO:0007669"/>
    <property type="project" value="UniProtKB-KW"/>
</dbReference>
<dbReference type="GO" id="GO:0000917">
    <property type="term" value="P:division septum assembly"/>
    <property type="evidence" value="ECO:0007669"/>
    <property type="project" value="UniProtKB-KW"/>
</dbReference>
<dbReference type="CDD" id="cd01876">
    <property type="entry name" value="YihA_EngB"/>
    <property type="match status" value="1"/>
</dbReference>
<dbReference type="Gene3D" id="3.40.50.300">
    <property type="entry name" value="P-loop containing nucleotide triphosphate hydrolases"/>
    <property type="match status" value="1"/>
</dbReference>
<dbReference type="HAMAP" id="MF_00321">
    <property type="entry name" value="GTPase_EngB"/>
    <property type="match status" value="1"/>
</dbReference>
<dbReference type="InterPro" id="IPR030393">
    <property type="entry name" value="G_ENGB_dom"/>
</dbReference>
<dbReference type="InterPro" id="IPR006073">
    <property type="entry name" value="GTP-bd"/>
</dbReference>
<dbReference type="InterPro" id="IPR019987">
    <property type="entry name" value="GTP-bd_ribosome_bio_YsxC"/>
</dbReference>
<dbReference type="InterPro" id="IPR027417">
    <property type="entry name" value="P-loop_NTPase"/>
</dbReference>
<dbReference type="NCBIfam" id="TIGR03598">
    <property type="entry name" value="GTPase_YsxC"/>
    <property type="match status" value="1"/>
</dbReference>
<dbReference type="PANTHER" id="PTHR11649:SF13">
    <property type="entry name" value="ENGB-TYPE G DOMAIN-CONTAINING PROTEIN"/>
    <property type="match status" value="1"/>
</dbReference>
<dbReference type="PANTHER" id="PTHR11649">
    <property type="entry name" value="MSS1/TRME-RELATED GTP-BINDING PROTEIN"/>
    <property type="match status" value="1"/>
</dbReference>
<dbReference type="Pfam" id="PF01926">
    <property type="entry name" value="MMR_HSR1"/>
    <property type="match status" value="1"/>
</dbReference>
<dbReference type="SUPFAM" id="SSF52540">
    <property type="entry name" value="P-loop containing nucleoside triphosphate hydrolases"/>
    <property type="match status" value="1"/>
</dbReference>
<dbReference type="PROSITE" id="PS51706">
    <property type="entry name" value="G_ENGB"/>
    <property type="match status" value="1"/>
</dbReference>
<protein>
    <recommendedName>
        <fullName evidence="1">Probable GTP-binding protein EngB</fullName>
    </recommendedName>
</protein>
<reference key="1">
    <citation type="submission" date="2009-01" db="EMBL/GenBank/DDBJ databases">
        <title>Complete sequence of Anaeromyxobacter dehalogenans 2CP-1.</title>
        <authorList>
            <person name="Lucas S."/>
            <person name="Copeland A."/>
            <person name="Lapidus A."/>
            <person name="Glavina del Rio T."/>
            <person name="Dalin E."/>
            <person name="Tice H."/>
            <person name="Bruce D."/>
            <person name="Goodwin L."/>
            <person name="Pitluck S."/>
            <person name="Saunders E."/>
            <person name="Brettin T."/>
            <person name="Detter J.C."/>
            <person name="Han C."/>
            <person name="Larimer F."/>
            <person name="Land M."/>
            <person name="Hauser L."/>
            <person name="Kyrpides N."/>
            <person name="Ovchinnikova G."/>
            <person name="Beliaev A.S."/>
            <person name="Richardson P."/>
        </authorList>
    </citation>
    <scope>NUCLEOTIDE SEQUENCE [LARGE SCALE GENOMIC DNA]</scope>
    <source>
        <strain>2CP-1 / ATCC BAA-258</strain>
    </source>
</reference>
<sequence>MPIQVVSADFAKTATRPEEWPRGATPEIAFVGRSNVGKSSMLNALARRKGLARVSSTPGRTRALQFFDLSYRPTPAARPRAIRFCDLPGYGYAKVARAERDRWTAMIEDYLRDRDVLRAVVLIVDARHPPSESDEDAAAFLVSAGRRLVVAATKTDKLPKARRVLALQQVERALGLARGDAVPFSAVEGTGTDALWARLAALAAEEPQTAEAEPPA</sequence>
<organism>
    <name type="scientific">Anaeromyxobacter dehalogenans (strain 2CP-1 / ATCC BAA-258)</name>
    <dbReference type="NCBI Taxonomy" id="455488"/>
    <lineage>
        <taxon>Bacteria</taxon>
        <taxon>Pseudomonadati</taxon>
        <taxon>Myxococcota</taxon>
        <taxon>Myxococcia</taxon>
        <taxon>Myxococcales</taxon>
        <taxon>Cystobacterineae</taxon>
        <taxon>Anaeromyxobacteraceae</taxon>
        <taxon>Anaeromyxobacter</taxon>
    </lineage>
</organism>
<comment type="function">
    <text evidence="1">Necessary for normal cell division and for the maintenance of normal septation.</text>
</comment>
<comment type="cofactor">
    <cofactor evidence="1">
        <name>Mg(2+)</name>
        <dbReference type="ChEBI" id="CHEBI:18420"/>
    </cofactor>
</comment>
<comment type="similarity">
    <text evidence="1">Belongs to the TRAFAC class TrmE-Era-EngA-EngB-Septin-like GTPase superfamily. EngB GTPase family.</text>
</comment>
<keyword id="KW-0131">Cell cycle</keyword>
<keyword id="KW-0132">Cell division</keyword>
<keyword id="KW-0342">GTP-binding</keyword>
<keyword id="KW-0460">Magnesium</keyword>
<keyword id="KW-0479">Metal-binding</keyword>
<keyword id="KW-0547">Nucleotide-binding</keyword>
<keyword id="KW-0717">Septation</keyword>
<accession>B8JEQ8</accession>
<feature type="chain" id="PRO_1000133041" description="Probable GTP-binding protein EngB">
    <location>
        <begin position="1"/>
        <end position="216"/>
    </location>
</feature>
<feature type="domain" description="EngB-type G" evidence="1">
    <location>
        <begin position="24"/>
        <end position="205"/>
    </location>
</feature>
<feature type="binding site" evidence="1">
    <location>
        <begin position="32"/>
        <end position="39"/>
    </location>
    <ligand>
        <name>GTP</name>
        <dbReference type="ChEBI" id="CHEBI:37565"/>
    </ligand>
</feature>
<feature type="binding site" evidence="1">
    <location>
        <position position="39"/>
    </location>
    <ligand>
        <name>Mg(2+)</name>
        <dbReference type="ChEBI" id="CHEBI:18420"/>
    </ligand>
</feature>
<feature type="binding site" evidence="1">
    <location>
        <begin position="59"/>
        <end position="63"/>
    </location>
    <ligand>
        <name>GTP</name>
        <dbReference type="ChEBI" id="CHEBI:37565"/>
    </ligand>
</feature>
<feature type="binding site" evidence="1">
    <location>
        <position position="61"/>
    </location>
    <ligand>
        <name>Mg(2+)</name>
        <dbReference type="ChEBI" id="CHEBI:18420"/>
    </ligand>
</feature>
<feature type="binding site" evidence="1">
    <location>
        <begin position="86"/>
        <end position="89"/>
    </location>
    <ligand>
        <name>GTP</name>
        <dbReference type="ChEBI" id="CHEBI:37565"/>
    </ligand>
</feature>
<feature type="binding site" evidence="1">
    <location>
        <begin position="153"/>
        <end position="156"/>
    </location>
    <ligand>
        <name>GTP</name>
        <dbReference type="ChEBI" id="CHEBI:37565"/>
    </ligand>
</feature>
<feature type="binding site" evidence="1">
    <location>
        <begin position="184"/>
        <end position="186"/>
    </location>
    <ligand>
        <name>GTP</name>
        <dbReference type="ChEBI" id="CHEBI:37565"/>
    </ligand>
</feature>